<keyword id="KW-0067">ATP-binding</keyword>
<keyword id="KW-0436">Ligase</keyword>
<keyword id="KW-0460">Magnesium</keyword>
<keyword id="KW-0479">Metal-binding</keyword>
<keyword id="KW-0547">Nucleotide-binding</keyword>
<keyword id="KW-0658">Purine biosynthesis</keyword>
<keyword id="KW-1185">Reference proteome</keyword>
<gene>
    <name evidence="1" type="primary">purT</name>
    <name type="ordered locus">HCH_02199</name>
</gene>
<organism>
    <name type="scientific">Hahella chejuensis (strain KCTC 2396)</name>
    <dbReference type="NCBI Taxonomy" id="349521"/>
    <lineage>
        <taxon>Bacteria</taxon>
        <taxon>Pseudomonadati</taxon>
        <taxon>Pseudomonadota</taxon>
        <taxon>Gammaproteobacteria</taxon>
        <taxon>Oceanospirillales</taxon>
        <taxon>Hahellaceae</taxon>
        <taxon>Hahella</taxon>
    </lineage>
</organism>
<protein>
    <recommendedName>
        <fullName evidence="1">Formate-dependent phosphoribosylglycinamide formyltransferase</fullName>
        <ecNumber evidence="1">6.3.1.21</ecNumber>
    </recommendedName>
    <alternativeName>
        <fullName evidence="1">5'-phosphoribosylglycinamide transformylase 2</fullName>
    </alternativeName>
    <alternativeName>
        <fullName evidence="1">Formate-dependent GAR transformylase</fullName>
    </alternativeName>
    <alternativeName>
        <fullName evidence="1">GAR transformylase 2</fullName>
        <shortName evidence="1">GART 2</shortName>
    </alternativeName>
    <alternativeName>
        <fullName evidence="1">Non-folate glycinamide ribonucleotide transformylase</fullName>
    </alternativeName>
    <alternativeName>
        <fullName evidence="1">Phosphoribosylglycinamide formyltransferase 2</fullName>
    </alternativeName>
</protein>
<proteinExistence type="inferred from homology"/>
<evidence type="ECO:0000255" key="1">
    <source>
        <dbReference type="HAMAP-Rule" id="MF_01643"/>
    </source>
</evidence>
<reference key="1">
    <citation type="journal article" date="2005" name="Nucleic Acids Res.">
        <title>Genomic blueprint of Hahella chejuensis, a marine microbe producing an algicidal agent.</title>
        <authorList>
            <person name="Jeong H."/>
            <person name="Yim J.H."/>
            <person name="Lee C."/>
            <person name="Choi S.-H."/>
            <person name="Park Y.K."/>
            <person name="Yoon S.H."/>
            <person name="Hur C.-G."/>
            <person name="Kang H.-Y."/>
            <person name="Kim D."/>
            <person name="Lee H.H."/>
            <person name="Park K.H."/>
            <person name="Park S.-H."/>
            <person name="Park H.-S."/>
            <person name="Lee H.K."/>
            <person name="Oh T.K."/>
            <person name="Kim J.F."/>
        </authorList>
    </citation>
    <scope>NUCLEOTIDE SEQUENCE [LARGE SCALE GENOMIC DNA]</scope>
    <source>
        <strain>KCTC 2396</strain>
    </source>
</reference>
<feature type="chain" id="PRO_0000319177" description="Formate-dependent phosphoribosylglycinamide formyltransferase">
    <location>
        <begin position="1"/>
        <end position="400"/>
    </location>
</feature>
<feature type="domain" description="ATP-grasp" evidence="1">
    <location>
        <begin position="119"/>
        <end position="308"/>
    </location>
</feature>
<feature type="binding site" evidence="1">
    <location>
        <begin position="22"/>
        <end position="23"/>
    </location>
    <ligand>
        <name>N(1)-(5-phospho-beta-D-ribosyl)glycinamide</name>
        <dbReference type="ChEBI" id="CHEBI:143788"/>
    </ligand>
</feature>
<feature type="binding site" evidence="1">
    <location>
        <position position="82"/>
    </location>
    <ligand>
        <name>N(1)-(5-phospho-beta-D-ribosyl)glycinamide</name>
        <dbReference type="ChEBI" id="CHEBI:143788"/>
    </ligand>
</feature>
<feature type="binding site" evidence="1">
    <location>
        <position position="114"/>
    </location>
    <ligand>
        <name>ATP</name>
        <dbReference type="ChEBI" id="CHEBI:30616"/>
    </ligand>
</feature>
<feature type="binding site" evidence="1">
    <location>
        <position position="155"/>
    </location>
    <ligand>
        <name>ATP</name>
        <dbReference type="ChEBI" id="CHEBI:30616"/>
    </ligand>
</feature>
<feature type="binding site" evidence="1">
    <location>
        <begin position="160"/>
        <end position="165"/>
    </location>
    <ligand>
        <name>ATP</name>
        <dbReference type="ChEBI" id="CHEBI:30616"/>
    </ligand>
</feature>
<feature type="binding site" evidence="1">
    <location>
        <begin position="195"/>
        <end position="198"/>
    </location>
    <ligand>
        <name>ATP</name>
        <dbReference type="ChEBI" id="CHEBI:30616"/>
    </ligand>
</feature>
<feature type="binding site" evidence="1">
    <location>
        <position position="203"/>
    </location>
    <ligand>
        <name>ATP</name>
        <dbReference type="ChEBI" id="CHEBI:30616"/>
    </ligand>
</feature>
<feature type="binding site" evidence="1">
    <location>
        <position position="267"/>
    </location>
    <ligand>
        <name>Mg(2+)</name>
        <dbReference type="ChEBI" id="CHEBI:18420"/>
    </ligand>
</feature>
<feature type="binding site" evidence="1">
    <location>
        <position position="279"/>
    </location>
    <ligand>
        <name>Mg(2+)</name>
        <dbReference type="ChEBI" id="CHEBI:18420"/>
    </ligand>
</feature>
<feature type="binding site" evidence="1">
    <location>
        <position position="286"/>
    </location>
    <ligand>
        <name>N(1)-(5-phospho-beta-D-ribosyl)glycinamide</name>
        <dbReference type="ChEBI" id="CHEBI:143788"/>
    </ligand>
</feature>
<feature type="binding site" evidence="1">
    <location>
        <position position="356"/>
    </location>
    <ligand>
        <name>N(1)-(5-phospho-beta-D-ribosyl)glycinamide</name>
        <dbReference type="ChEBI" id="CHEBI:143788"/>
    </ligand>
</feature>
<feature type="binding site" evidence="1">
    <location>
        <begin position="363"/>
        <end position="364"/>
    </location>
    <ligand>
        <name>N(1)-(5-phospho-beta-D-ribosyl)glycinamide</name>
        <dbReference type="ChEBI" id="CHEBI:143788"/>
    </ligand>
</feature>
<comment type="function">
    <text evidence="1">Involved in the de novo purine biosynthesis. Catalyzes the transfer of formate to 5-phospho-ribosyl-glycinamide (GAR), producing 5-phospho-ribosyl-N-formylglycinamide (FGAR). Formate is provided by PurU via hydrolysis of 10-formyl-tetrahydrofolate.</text>
</comment>
<comment type="catalytic activity">
    <reaction evidence="1">
        <text>N(1)-(5-phospho-beta-D-ribosyl)glycinamide + formate + ATP = N(2)-formyl-N(1)-(5-phospho-beta-D-ribosyl)glycinamide + ADP + phosphate + H(+)</text>
        <dbReference type="Rhea" id="RHEA:24829"/>
        <dbReference type="ChEBI" id="CHEBI:15378"/>
        <dbReference type="ChEBI" id="CHEBI:15740"/>
        <dbReference type="ChEBI" id="CHEBI:30616"/>
        <dbReference type="ChEBI" id="CHEBI:43474"/>
        <dbReference type="ChEBI" id="CHEBI:143788"/>
        <dbReference type="ChEBI" id="CHEBI:147286"/>
        <dbReference type="ChEBI" id="CHEBI:456216"/>
        <dbReference type="EC" id="6.3.1.21"/>
    </reaction>
    <physiologicalReaction direction="left-to-right" evidence="1">
        <dbReference type="Rhea" id="RHEA:24830"/>
    </physiologicalReaction>
</comment>
<comment type="pathway">
    <text evidence="1">Purine metabolism; IMP biosynthesis via de novo pathway; N(2)-formyl-N(1)-(5-phospho-D-ribosyl)glycinamide from N(1)-(5-phospho-D-ribosyl)glycinamide (formate route): step 1/1.</text>
</comment>
<comment type="subunit">
    <text evidence="1">Homodimer.</text>
</comment>
<comment type="similarity">
    <text evidence="1">Belongs to the PurK/PurT family.</text>
</comment>
<dbReference type="EC" id="6.3.1.21" evidence="1"/>
<dbReference type="EMBL" id="CP000155">
    <property type="protein sequence ID" value="ABC29026.1"/>
    <property type="molecule type" value="Genomic_DNA"/>
</dbReference>
<dbReference type="RefSeq" id="WP_011396096.1">
    <property type="nucleotide sequence ID" value="NC_007645.1"/>
</dbReference>
<dbReference type="SMR" id="Q2SJZ8"/>
<dbReference type="STRING" id="349521.HCH_02199"/>
<dbReference type="KEGG" id="hch:HCH_02199"/>
<dbReference type="eggNOG" id="COG0027">
    <property type="taxonomic scope" value="Bacteria"/>
</dbReference>
<dbReference type="HOGENOM" id="CLU_011534_1_3_6"/>
<dbReference type="OrthoDB" id="9804625at2"/>
<dbReference type="UniPathway" id="UPA00074">
    <property type="reaction ID" value="UER00127"/>
</dbReference>
<dbReference type="Proteomes" id="UP000000238">
    <property type="component" value="Chromosome"/>
</dbReference>
<dbReference type="GO" id="GO:0005829">
    <property type="term" value="C:cytosol"/>
    <property type="evidence" value="ECO:0007669"/>
    <property type="project" value="TreeGrafter"/>
</dbReference>
<dbReference type="GO" id="GO:0005524">
    <property type="term" value="F:ATP binding"/>
    <property type="evidence" value="ECO:0007669"/>
    <property type="project" value="UniProtKB-UniRule"/>
</dbReference>
<dbReference type="GO" id="GO:0000287">
    <property type="term" value="F:magnesium ion binding"/>
    <property type="evidence" value="ECO:0007669"/>
    <property type="project" value="InterPro"/>
</dbReference>
<dbReference type="GO" id="GO:0043815">
    <property type="term" value="F:phosphoribosylglycinamide formyltransferase 2 activity"/>
    <property type="evidence" value="ECO:0007669"/>
    <property type="project" value="UniProtKB-UniRule"/>
</dbReference>
<dbReference type="GO" id="GO:0004644">
    <property type="term" value="F:phosphoribosylglycinamide formyltransferase activity"/>
    <property type="evidence" value="ECO:0007669"/>
    <property type="project" value="InterPro"/>
</dbReference>
<dbReference type="GO" id="GO:0006189">
    <property type="term" value="P:'de novo' IMP biosynthetic process"/>
    <property type="evidence" value="ECO:0007669"/>
    <property type="project" value="UniProtKB-UniRule"/>
</dbReference>
<dbReference type="FunFam" id="3.30.1490.20:FF:000013">
    <property type="entry name" value="Formate-dependent phosphoribosylglycinamide formyltransferase"/>
    <property type="match status" value="1"/>
</dbReference>
<dbReference type="FunFam" id="3.30.470.20:FF:000027">
    <property type="entry name" value="Formate-dependent phosphoribosylglycinamide formyltransferase"/>
    <property type="match status" value="1"/>
</dbReference>
<dbReference type="FunFam" id="3.40.50.20:FF:000007">
    <property type="entry name" value="Formate-dependent phosphoribosylglycinamide formyltransferase"/>
    <property type="match status" value="1"/>
</dbReference>
<dbReference type="Gene3D" id="3.40.50.20">
    <property type="match status" value="1"/>
</dbReference>
<dbReference type="Gene3D" id="3.30.1490.20">
    <property type="entry name" value="ATP-grasp fold, A domain"/>
    <property type="match status" value="1"/>
</dbReference>
<dbReference type="Gene3D" id="3.30.470.20">
    <property type="entry name" value="ATP-grasp fold, B domain"/>
    <property type="match status" value="1"/>
</dbReference>
<dbReference type="HAMAP" id="MF_01643">
    <property type="entry name" value="PurT"/>
    <property type="match status" value="1"/>
</dbReference>
<dbReference type="InterPro" id="IPR011761">
    <property type="entry name" value="ATP-grasp"/>
</dbReference>
<dbReference type="InterPro" id="IPR003135">
    <property type="entry name" value="ATP-grasp_carboxylate-amine"/>
</dbReference>
<dbReference type="InterPro" id="IPR013815">
    <property type="entry name" value="ATP_grasp_subdomain_1"/>
</dbReference>
<dbReference type="InterPro" id="IPR016185">
    <property type="entry name" value="PreATP-grasp_dom_sf"/>
</dbReference>
<dbReference type="InterPro" id="IPR005862">
    <property type="entry name" value="PurT"/>
</dbReference>
<dbReference type="InterPro" id="IPR054350">
    <property type="entry name" value="PurT/PurK_preATP-grasp"/>
</dbReference>
<dbReference type="InterPro" id="IPR048740">
    <property type="entry name" value="PurT_C"/>
</dbReference>
<dbReference type="InterPro" id="IPR011054">
    <property type="entry name" value="Rudment_hybrid_motif"/>
</dbReference>
<dbReference type="NCBIfam" id="NF006766">
    <property type="entry name" value="PRK09288.1"/>
    <property type="match status" value="1"/>
</dbReference>
<dbReference type="NCBIfam" id="TIGR01142">
    <property type="entry name" value="purT"/>
    <property type="match status" value="1"/>
</dbReference>
<dbReference type="PANTHER" id="PTHR43055">
    <property type="entry name" value="FORMATE-DEPENDENT PHOSPHORIBOSYLGLYCINAMIDE FORMYLTRANSFERASE"/>
    <property type="match status" value="1"/>
</dbReference>
<dbReference type="PANTHER" id="PTHR43055:SF1">
    <property type="entry name" value="FORMATE-DEPENDENT PHOSPHORIBOSYLGLYCINAMIDE FORMYLTRANSFERASE"/>
    <property type="match status" value="1"/>
</dbReference>
<dbReference type="Pfam" id="PF02222">
    <property type="entry name" value="ATP-grasp"/>
    <property type="match status" value="1"/>
</dbReference>
<dbReference type="Pfam" id="PF21244">
    <property type="entry name" value="PurT_C"/>
    <property type="match status" value="1"/>
</dbReference>
<dbReference type="Pfam" id="PF22660">
    <property type="entry name" value="RS_preATP-grasp-like"/>
    <property type="match status" value="1"/>
</dbReference>
<dbReference type="SUPFAM" id="SSF56059">
    <property type="entry name" value="Glutathione synthetase ATP-binding domain-like"/>
    <property type="match status" value="1"/>
</dbReference>
<dbReference type="SUPFAM" id="SSF52440">
    <property type="entry name" value="PreATP-grasp domain"/>
    <property type="match status" value="1"/>
</dbReference>
<dbReference type="SUPFAM" id="SSF51246">
    <property type="entry name" value="Rudiment single hybrid motif"/>
    <property type="match status" value="1"/>
</dbReference>
<dbReference type="PROSITE" id="PS50975">
    <property type="entry name" value="ATP_GRASP"/>
    <property type="match status" value="1"/>
</dbReference>
<accession>Q2SJZ8</accession>
<name>PURT_HAHCH</name>
<sequence length="400" mass="43058">MVRIGTPLTDVATRAMLLGSGELGKEVAIELQRFGVEVIAVDRYSNAPAMQVAHRAHVIDMLDPKQLRALIELERPDFIIPEIEAIATAELLELERSGFNVVPSARAANLTMNREGIRRLAAEELGLSTSPYAFAADFESFRDAVSSIGVPCVVKPIMSSSGKGQSVIHSDGDVERAWRYAQEGGRAGQGKVIVEGFVDFDYEVTLLTLRHAGGTSFCDPIGHLQVDGDYRVSWQPHPMSAIALGAAQDIAEKVTVALGGCGIFGVELFVKGDEVYFSEVSPRPHDTGLVTLVSQNLSEFALHARALLGLPVPLIKQTGASASVALLVEGDSSRVCFSSLEAALCHPEVQLRLFGKPEVHGKRRMGVVLAQSENLDEARKLAQKAVDSIVVELGPDIKQE</sequence>